<name>RL16_PROMH</name>
<feature type="chain" id="PRO_1000143012" description="Large ribosomal subunit protein uL16">
    <location>
        <begin position="1"/>
        <end position="136"/>
    </location>
</feature>
<dbReference type="EMBL" id="AM942759">
    <property type="protein sequence ID" value="CAR46392.1"/>
    <property type="molecule type" value="Genomic_DNA"/>
</dbReference>
<dbReference type="RefSeq" id="WP_004246957.1">
    <property type="nucleotide sequence ID" value="NC_010554.1"/>
</dbReference>
<dbReference type="SMR" id="B4F1J1"/>
<dbReference type="EnsemblBacteria" id="CAR46392">
    <property type="protein sequence ID" value="CAR46392"/>
    <property type="gene ID" value="PMI3262"/>
</dbReference>
<dbReference type="GeneID" id="6801061"/>
<dbReference type="KEGG" id="pmr:PMI3262"/>
<dbReference type="eggNOG" id="COG0197">
    <property type="taxonomic scope" value="Bacteria"/>
</dbReference>
<dbReference type="HOGENOM" id="CLU_078858_2_1_6"/>
<dbReference type="Proteomes" id="UP000008319">
    <property type="component" value="Chromosome"/>
</dbReference>
<dbReference type="GO" id="GO:0022625">
    <property type="term" value="C:cytosolic large ribosomal subunit"/>
    <property type="evidence" value="ECO:0007669"/>
    <property type="project" value="TreeGrafter"/>
</dbReference>
<dbReference type="GO" id="GO:0019843">
    <property type="term" value="F:rRNA binding"/>
    <property type="evidence" value="ECO:0007669"/>
    <property type="project" value="UniProtKB-UniRule"/>
</dbReference>
<dbReference type="GO" id="GO:0003735">
    <property type="term" value="F:structural constituent of ribosome"/>
    <property type="evidence" value="ECO:0007669"/>
    <property type="project" value="InterPro"/>
</dbReference>
<dbReference type="GO" id="GO:0000049">
    <property type="term" value="F:tRNA binding"/>
    <property type="evidence" value="ECO:0007669"/>
    <property type="project" value="UniProtKB-KW"/>
</dbReference>
<dbReference type="GO" id="GO:0006412">
    <property type="term" value="P:translation"/>
    <property type="evidence" value="ECO:0007669"/>
    <property type="project" value="UniProtKB-UniRule"/>
</dbReference>
<dbReference type="CDD" id="cd01433">
    <property type="entry name" value="Ribosomal_L16_L10e"/>
    <property type="match status" value="1"/>
</dbReference>
<dbReference type="FunFam" id="3.90.1170.10:FF:000001">
    <property type="entry name" value="50S ribosomal protein L16"/>
    <property type="match status" value="1"/>
</dbReference>
<dbReference type="Gene3D" id="3.90.1170.10">
    <property type="entry name" value="Ribosomal protein L10e/L16"/>
    <property type="match status" value="1"/>
</dbReference>
<dbReference type="HAMAP" id="MF_01342">
    <property type="entry name" value="Ribosomal_uL16"/>
    <property type="match status" value="1"/>
</dbReference>
<dbReference type="InterPro" id="IPR047873">
    <property type="entry name" value="Ribosomal_uL16"/>
</dbReference>
<dbReference type="InterPro" id="IPR000114">
    <property type="entry name" value="Ribosomal_uL16_bact-type"/>
</dbReference>
<dbReference type="InterPro" id="IPR020798">
    <property type="entry name" value="Ribosomal_uL16_CS"/>
</dbReference>
<dbReference type="InterPro" id="IPR016180">
    <property type="entry name" value="Ribosomal_uL16_dom"/>
</dbReference>
<dbReference type="InterPro" id="IPR036920">
    <property type="entry name" value="Ribosomal_uL16_sf"/>
</dbReference>
<dbReference type="NCBIfam" id="TIGR01164">
    <property type="entry name" value="rplP_bact"/>
    <property type="match status" value="1"/>
</dbReference>
<dbReference type="PANTHER" id="PTHR12220">
    <property type="entry name" value="50S/60S RIBOSOMAL PROTEIN L16"/>
    <property type="match status" value="1"/>
</dbReference>
<dbReference type="PANTHER" id="PTHR12220:SF13">
    <property type="entry name" value="LARGE RIBOSOMAL SUBUNIT PROTEIN UL16M"/>
    <property type="match status" value="1"/>
</dbReference>
<dbReference type="Pfam" id="PF00252">
    <property type="entry name" value="Ribosomal_L16"/>
    <property type="match status" value="1"/>
</dbReference>
<dbReference type="PRINTS" id="PR00060">
    <property type="entry name" value="RIBOSOMALL16"/>
</dbReference>
<dbReference type="SUPFAM" id="SSF54686">
    <property type="entry name" value="Ribosomal protein L16p/L10e"/>
    <property type="match status" value="1"/>
</dbReference>
<dbReference type="PROSITE" id="PS00586">
    <property type="entry name" value="RIBOSOMAL_L16_1"/>
    <property type="match status" value="1"/>
</dbReference>
<dbReference type="PROSITE" id="PS00701">
    <property type="entry name" value="RIBOSOMAL_L16_2"/>
    <property type="match status" value="1"/>
</dbReference>
<organism>
    <name type="scientific">Proteus mirabilis (strain HI4320)</name>
    <dbReference type="NCBI Taxonomy" id="529507"/>
    <lineage>
        <taxon>Bacteria</taxon>
        <taxon>Pseudomonadati</taxon>
        <taxon>Pseudomonadota</taxon>
        <taxon>Gammaproteobacteria</taxon>
        <taxon>Enterobacterales</taxon>
        <taxon>Morganellaceae</taxon>
        <taxon>Proteus</taxon>
    </lineage>
</organism>
<keyword id="KW-1185">Reference proteome</keyword>
<keyword id="KW-0687">Ribonucleoprotein</keyword>
<keyword id="KW-0689">Ribosomal protein</keyword>
<keyword id="KW-0694">RNA-binding</keyword>
<keyword id="KW-0699">rRNA-binding</keyword>
<keyword id="KW-0820">tRNA-binding</keyword>
<protein>
    <recommendedName>
        <fullName evidence="1">Large ribosomal subunit protein uL16</fullName>
    </recommendedName>
    <alternativeName>
        <fullName evidence="2">50S ribosomal protein L16</fullName>
    </alternativeName>
</protein>
<gene>
    <name evidence="1" type="primary">rplP</name>
    <name type="ordered locus">PMI3262</name>
</gene>
<accession>B4F1J1</accession>
<proteinExistence type="inferred from homology"/>
<reference key="1">
    <citation type="journal article" date="2008" name="J. Bacteriol.">
        <title>Complete genome sequence of uropathogenic Proteus mirabilis, a master of both adherence and motility.</title>
        <authorList>
            <person name="Pearson M.M."/>
            <person name="Sebaihia M."/>
            <person name="Churcher C."/>
            <person name="Quail M.A."/>
            <person name="Seshasayee A.S."/>
            <person name="Luscombe N.M."/>
            <person name="Abdellah Z."/>
            <person name="Arrosmith C."/>
            <person name="Atkin B."/>
            <person name="Chillingworth T."/>
            <person name="Hauser H."/>
            <person name="Jagels K."/>
            <person name="Moule S."/>
            <person name="Mungall K."/>
            <person name="Norbertczak H."/>
            <person name="Rabbinowitsch E."/>
            <person name="Walker D."/>
            <person name="Whithead S."/>
            <person name="Thomson N.R."/>
            <person name="Rather P.N."/>
            <person name="Parkhill J."/>
            <person name="Mobley H.L.T."/>
        </authorList>
    </citation>
    <scope>NUCLEOTIDE SEQUENCE [LARGE SCALE GENOMIC DNA]</scope>
    <source>
        <strain>HI4320</strain>
    </source>
</reference>
<sequence length="136" mass="15308">MLQPKRTKFRKVHKGRNRGLAIGTDVSFGTYGLKAVGRGRLTARQIEAARRAMTRAVKRQGKIWIRVFPDKPITEKPLEVRMGKGKGNVEYWVALIQPGKVLYEMDGVPEEVAREAFQLAAAKLPIKTTFVTKTVM</sequence>
<comment type="function">
    <text evidence="1">Binds 23S rRNA and is also seen to make contacts with the A and possibly P site tRNAs.</text>
</comment>
<comment type="subunit">
    <text evidence="1">Part of the 50S ribosomal subunit.</text>
</comment>
<comment type="similarity">
    <text evidence="1">Belongs to the universal ribosomal protein uL16 family.</text>
</comment>
<evidence type="ECO:0000255" key="1">
    <source>
        <dbReference type="HAMAP-Rule" id="MF_01342"/>
    </source>
</evidence>
<evidence type="ECO:0000305" key="2"/>